<keyword id="KW-0963">Cytoplasm</keyword>
<keyword id="KW-0275">Fatty acid biosynthesis</keyword>
<keyword id="KW-0276">Fatty acid metabolism</keyword>
<keyword id="KW-0413">Isomerase</keyword>
<keyword id="KW-0444">Lipid biosynthesis</keyword>
<keyword id="KW-0443">Lipid metabolism</keyword>
<keyword id="KW-0456">Lyase</keyword>
<keyword id="KW-1185">Reference proteome</keyword>
<protein>
    <recommendedName>
        <fullName evidence="1">3-hydroxydecanoyl-[acyl-carrier-protein] dehydratase</fullName>
        <ecNumber evidence="1">4.2.1.59</ecNumber>
    </recommendedName>
    <alternativeName>
        <fullName evidence="1">3-hydroxyacyl-[acyl-carrier-protein] dehydratase FabA</fullName>
    </alternativeName>
    <alternativeName>
        <fullName evidence="1">Beta-hydroxydecanoyl thioester dehydrase</fullName>
    </alternativeName>
    <alternativeName>
        <fullName evidence="1">Trans-2-decenoyl-[acyl-carrier-protein] isomerase</fullName>
        <ecNumber evidence="1">5.3.3.14</ecNumber>
    </alternativeName>
</protein>
<proteinExistence type="inferred from homology"/>
<organism>
    <name type="scientific">Saccharophagus degradans (strain 2-40 / ATCC 43961 / DSM 17024)</name>
    <dbReference type="NCBI Taxonomy" id="203122"/>
    <lineage>
        <taxon>Bacteria</taxon>
        <taxon>Pseudomonadati</taxon>
        <taxon>Pseudomonadota</taxon>
        <taxon>Gammaproteobacteria</taxon>
        <taxon>Cellvibrionales</taxon>
        <taxon>Cellvibrionaceae</taxon>
        <taxon>Saccharophagus</taxon>
    </lineage>
</organism>
<evidence type="ECO:0000255" key="1">
    <source>
        <dbReference type="HAMAP-Rule" id="MF_00405"/>
    </source>
</evidence>
<dbReference type="EC" id="4.2.1.59" evidence="1"/>
<dbReference type="EC" id="5.3.3.14" evidence="1"/>
<dbReference type="EMBL" id="CP000282">
    <property type="protein sequence ID" value="ABD80261.1"/>
    <property type="molecule type" value="Genomic_DNA"/>
</dbReference>
<dbReference type="RefSeq" id="WP_011467481.1">
    <property type="nucleotide sequence ID" value="NC_007912.1"/>
</dbReference>
<dbReference type="SMR" id="Q21M18"/>
<dbReference type="STRING" id="203122.Sde_0999"/>
<dbReference type="GeneID" id="98612683"/>
<dbReference type="KEGG" id="sde:Sde_0999"/>
<dbReference type="eggNOG" id="COG0764">
    <property type="taxonomic scope" value="Bacteria"/>
</dbReference>
<dbReference type="HOGENOM" id="CLU_097925_0_0_6"/>
<dbReference type="OrthoDB" id="9786735at2"/>
<dbReference type="UniPathway" id="UPA00094"/>
<dbReference type="Proteomes" id="UP000001947">
    <property type="component" value="Chromosome"/>
</dbReference>
<dbReference type="GO" id="GO:0005737">
    <property type="term" value="C:cytoplasm"/>
    <property type="evidence" value="ECO:0007669"/>
    <property type="project" value="UniProtKB-SubCell"/>
</dbReference>
<dbReference type="GO" id="GO:0019171">
    <property type="term" value="F:(3R)-hydroxyacyl-[acyl-carrier-protein] dehydratase activity"/>
    <property type="evidence" value="ECO:0007669"/>
    <property type="project" value="UniProtKB-UniRule"/>
</dbReference>
<dbReference type="GO" id="GO:0034017">
    <property type="term" value="F:trans-2-decenoyl-acyl-carrier-protein isomerase activity"/>
    <property type="evidence" value="ECO:0007669"/>
    <property type="project" value="UniProtKB-UniRule"/>
</dbReference>
<dbReference type="GO" id="GO:0006636">
    <property type="term" value="P:unsaturated fatty acid biosynthetic process"/>
    <property type="evidence" value="ECO:0007669"/>
    <property type="project" value="UniProtKB-UniRule"/>
</dbReference>
<dbReference type="CDD" id="cd01287">
    <property type="entry name" value="FabA"/>
    <property type="match status" value="1"/>
</dbReference>
<dbReference type="Gene3D" id="3.10.129.10">
    <property type="entry name" value="Hotdog Thioesterase"/>
    <property type="match status" value="1"/>
</dbReference>
<dbReference type="HAMAP" id="MF_00405">
    <property type="entry name" value="FabA"/>
    <property type="match status" value="1"/>
</dbReference>
<dbReference type="InterPro" id="IPR010083">
    <property type="entry name" value="FabA"/>
</dbReference>
<dbReference type="InterPro" id="IPR013114">
    <property type="entry name" value="FabA_FabZ"/>
</dbReference>
<dbReference type="InterPro" id="IPR029069">
    <property type="entry name" value="HotDog_dom_sf"/>
</dbReference>
<dbReference type="NCBIfam" id="TIGR01749">
    <property type="entry name" value="fabA"/>
    <property type="match status" value="1"/>
</dbReference>
<dbReference type="NCBIfam" id="NF003509">
    <property type="entry name" value="PRK05174.1"/>
    <property type="match status" value="1"/>
</dbReference>
<dbReference type="PANTHER" id="PTHR30272">
    <property type="entry name" value="3-HYDROXYACYL-[ACYL-CARRIER-PROTEIN] DEHYDRATASE"/>
    <property type="match status" value="1"/>
</dbReference>
<dbReference type="PANTHER" id="PTHR30272:SF8">
    <property type="entry name" value="3-HYDROXYDECANOYL-[ACYL-CARRIER-PROTEIN] DEHYDRATASE"/>
    <property type="match status" value="1"/>
</dbReference>
<dbReference type="Pfam" id="PF07977">
    <property type="entry name" value="FabA"/>
    <property type="match status" value="1"/>
</dbReference>
<dbReference type="SUPFAM" id="SSF54637">
    <property type="entry name" value="Thioesterase/thiol ester dehydrase-isomerase"/>
    <property type="match status" value="1"/>
</dbReference>
<feature type="chain" id="PRO_0000267748" description="3-hydroxydecanoyl-[acyl-carrier-protein] dehydratase">
    <location>
        <begin position="1"/>
        <end position="174"/>
    </location>
</feature>
<feature type="active site" evidence="1">
    <location>
        <position position="73"/>
    </location>
</feature>
<sequence>MQAFEQKSSYERAELITCGQGNMFGPGNAQLPVPNMLMLDRISHISQTGGEFGKGEIIAELDITPDLWFFDCHFPGDPVMPGCLGLDAMWQLVGFFLAWKGNAGRGRALGAGEVKFTGQILPTASKVTYHINLKRVIERKLVMGIADGRVAVDGKEIYFAKDLRVGLFTNTDSF</sequence>
<comment type="function">
    <text evidence="1">Necessary for the introduction of cis unsaturation into fatty acids. Catalyzes the dehydration of (3R)-3-hydroxydecanoyl-ACP to E-(2)-decenoyl-ACP and then its isomerization to Z-(3)-decenoyl-ACP. Can catalyze the dehydratase reaction for beta-hydroxyacyl-ACPs with saturated chain lengths up to 16:0, being most active on intermediate chain length.</text>
</comment>
<comment type="catalytic activity">
    <reaction evidence="1">
        <text>a (3R)-hydroxyacyl-[ACP] = a (2E)-enoyl-[ACP] + H2O</text>
        <dbReference type="Rhea" id="RHEA:13097"/>
        <dbReference type="Rhea" id="RHEA-COMP:9925"/>
        <dbReference type="Rhea" id="RHEA-COMP:9945"/>
        <dbReference type="ChEBI" id="CHEBI:15377"/>
        <dbReference type="ChEBI" id="CHEBI:78784"/>
        <dbReference type="ChEBI" id="CHEBI:78827"/>
        <dbReference type="EC" id="4.2.1.59"/>
    </reaction>
</comment>
<comment type="catalytic activity">
    <reaction evidence="1">
        <text>(3R)-hydroxydecanoyl-[ACP] = (2E)-decenoyl-[ACP] + H2O</text>
        <dbReference type="Rhea" id="RHEA:41860"/>
        <dbReference type="Rhea" id="RHEA-COMP:9638"/>
        <dbReference type="Rhea" id="RHEA-COMP:9639"/>
        <dbReference type="ChEBI" id="CHEBI:15377"/>
        <dbReference type="ChEBI" id="CHEBI:78466"/>
        <dbReference type="ChEBI" id="CHEBI:78467"/>
    </reaction>
</comment>
<comment type="catalytic activity">
    <reaction evidence="1">
        <text>(2E)-decenoyl-[ACP] = (3Z)-decenoyl-[ACP]</text>
        <dbReference type="Rhea" id="RHEA:23568"/>
        <dbReference type="Rhea" id="RHEA-COMP:9639"/>
        <dbReference type="Rhea" id="RHEA-COMP:9927"/>
        <dbReference type="ChEBI" id="CHEBI:78467"/>
        <dbReference type="ChEBI" id="CHEBI:78798"/>
        <dbReference type="EC" id="5.3.3.14"/>
    </reaction>
</comment>
<comment type="pathway">
    <text evidence="1">Lipid metabolism; fatty acid biosynthesis.</text>
</comment>
<comment type="subunit">
    <text evidence="1">Homodimer.</text>
</comment>
<comment type="subcellular location">
    <subcellularLocation>
        <location evidence="1">Cytoplasm</location>
    </subcellularLocation>
</comment>
<comment type="similarity">
    <text evidence="1">Belongs to the thioester dehydratase family. FabA subfamily.</text>
</comment>
<accession>Q21M18</accession>
<gene>
    <name evidence="1" type="primary">fabA</name>
    <name type="ordered locus">Sde_0999</name>
</gene>
<name>FABA_SACD2</name>
<reference key="1">
    <citation type="journal article" date="2008" name="PLoS Genet.">
        <title>Complete genome sequence of the complex carbohydrate-degrading marine bacterium, Saccharophagus degradans strain 2-40 T.</title>
        <authorList>
            <person name="Weiner R.M."/>
            <person name="Taylor L.E. II"/>
            <person name="Henrissat B."/>
            <person name="Hauser L."/>
            <person name="Land M."/>
            <person name="Coutinho P.M."/>
            <person name="Rancurel C."/>
            <person name="Saunders E.H."/>
            <person name="Longmire A.G."/>
            <person name="Zhang H."/>
            <person name="Bayer E.A."/>
            <person name="Gilbert H.J."/>
            <person name="Larimer F."/>
            <person name="Zhulin I.B."/>
            <person name="Ekborg N.A."/>
            <person name="Lamed R."/>
            <person name="Richardson P.M."/>
            <person name="Borovok I."/>
            <person name="Hutcheson S."/>
        </authorList>
    </citation>
    <scope>NUCLEOTIDE SEQUENCE [LARGE SCALE GENOMIC DNA]</scope>
    <source>
        <strain>2-40 / ATCC 43961 / DSM 17024</strain>
    </source>
</reference>